<dbReference type="EMBL" id="D31894">
    <property type="protein sequence ID" value="BAA06692.1"/>
    <property type="molecule type" value="mRNA"/>
</dbReference>
<dbReference type="EMBL" id="BC123173">
    <property type="protein sequence ID" value="AAI23174.1"/>
    <property type="molecule type" value="mRNA"/>
</dbReference>
<dbReference type="PIR" id="JG0191">
    <property type="entry name" value="JG0191"/>
</dbReference>
<dbReference type="PIR" id="JQ1324">
    <property type="entry name" value="JQ1324"/>
</dbReference>
<dbReference type="RefSeq" id="NP_001081354.1">
    <property type="nucleotide sequence ID" value="NM_001087885.1"/>
</dbReference>
<dbReference type="SMR" id="P27088"/>
<dbReference type="BioGRID" id="99129">
    <property type="interactions" value="1"/>
</dbReference>
<dbReference type="IntAct" id="P27088">
    <property type="interactions" value="1"/>
</dbReference>
<dbReference type="DNASU" id="397790"/>
<dbReference type="GeneID" id="397790"/>
<dbReference type="KEGG" id="xla:397790"/>
<dbReference type="AGR" id="Xenbase:XB-GENE-977987"/>
<dbReference type="CTD" id="397790"/>
<dbReference type="Xenbase" id="XB-GENE-977987">
    <property type="gene designation" value="xpa.L"/>
</dbReference>
<dbReference type="OrthoDB" id="68328at2759"/>
<dbReference type="Proteomes" id="UP000186698">
    <property type="component" value="Chromosome 1L"/>
</dbReference>
<dbReference type="Bgee" id="397790">
    <property type="expression patterns" value="Expressed in neurula embryo and 19 other cell types or tissues"/>
</dbReference>
<dbReference type="GO" id="GO:1990391">
    <property type="term" value="C:DNA repair complex"/>
    <property type="evidence" value="ECO:0000314"/>
    <property type="project" value="CAFA"/>
</dbReference>
<dbReference type="GO" id="GO:0005662">
    <property type="term" value="C:DNA replication factor A complex"/>
    <property type="evidence" value="ECO:0000314"/>
    <property type="project" value="CAFA"/>
</dbReference>
<dbReference type="GO" id="GO:0000110">
    <property type="term" value="C:nucleotide-excision repair factor 1 complex"/>
    <property type="evidence" value="ECO:0000318"/>
    <property type="project" value="GO_Central"/>
</dbReference>
<dbReference type="GO" id="GO:0005634">
    <property type="term" value="C:nucleus"/>
    <property type="evidence" value="ECO:0000315"/>
    <property type="project" value="CAFA"/>
</dbReference>
<dbReference type="GO" id="GO:0003684">
    <property type="term" value="F:damaged DNA binding"/>
    <property type="evidence" value="ECO:0000314"/>
    <property type="project" value="CAFA"/>
</dbReference>
<dbReference type="GO" id="GO:0003690">
    <property type="term" value="F:double-stranded DNA binding"/>
    <property type="evidence" value="ECO:0000314"/>
    <property type="project" value="CAFA"/>
</dbReference>
<dbReference type="GO" id="GO:0008270">
    <property type="term" value="F:zinc ion binding"/>
    <property type="evidence" value="ECO:0000314"/>
    <property type="project" value="CAFA"/>
</dbReference>
<dbReference type="GO" id="GO:0006284">
    <property type="term" value="P:base-excision repair"/>
    <property type="evidence" value="ECO:0000318"/>
    <property type="project" value="GO_Central"/>
</dbReference>
<dbReference type="GO" id="GO:0006289">
    <property type="term" value="P:nucleotide-excision repair"/>
    <property type="evidence" value="ECO:0000314"/>
    <property type="project" value="CAFA"/>
</dbReference>
<dbReference type="GO" id="GO:1901255">
    <property type="term" value="P:nucleotide-excision repair involved in interstrand cross-link repair"/>
    <property type="evidence" value="ECO:0000318"/>
    <property type="project" value="GO_Central"/>
</dbReference>
<dbReference type="GO" id="GO:0000715">
    <property type="term" value="P:nucleotide-excision repair, DNA damage recognition"/>
    <property type="evidence" value="ECO:0000318"/>
    <property type="project" value="GO_Central"/>
</dbReference>
<dbReference type="GO" id="GO:0070914">
    <property type="term" value="P:UV-damage excision repair"/>
    <property type="evidence" value="ECO:0000314"/>
    <property type="project" value="CAFA"/>
</dbReference>
<dbReference type="CDD" id="cd21076">
    <property type="entry name" value="DBD_XPA"/>
    <property type="match status" value="1"/>
</dbReference>
<dbReference type="DisProt" id="DP00091"/>
<dbReference type="FunFam" id="3.90.530.10:FF:000001">
    <property type="entry name" value="DNA repair protein complementing XP-A cells"/>
    <property type="match status" value="1"/>
</dbReference>
<dbReference type="Gene3D" id="3.90.530.10">
    <property type="entry name" value="XPA C-terminal domain"/>
    <property type="match status" value="1"/>
</dbReference>
<dbReference type="InterPro" id="IPR009061">
    <property type="entry name" value="DNA-bd_dom_put_sf"/>
</dbReference>
<dbReference type="InterPro" id="IPR000465">
    <property type="entry name" value="XPA/RAD14"/>
</dbReference>
<dbReference type="InterPro" id="IPR022656">
    <property type="entry name" value="XPA_C"/>
</dbReference>
<dbReference type="InterPro" id="IPR022658">
    <property type="entry name" value="XPA_CS"/>
</dbReference>
<dbReference type="InterPro" id="IPR037129">
    <property type="entry name" value="XPA_sf"/>
</dbReference>
<dbReference type="InterPro" id="IPR022652">
    <property type="entry name" value="Znf_XPA_CS"/>
</dbReference>
<dbReference type="NCBIfam" id="TIGR00598">
    <property type="entry name" value="rad14"/>
    <property type="match status" value="1"/>
</dbReference>
<dbReference type="PANTHER" id="PTHR10142">
    <property type="entry name" value="DNA REPAIR PROTEIN COMPLEMENTING XP-A CELLS"/>
    <property type="match status" value="1"/>
</dbReference>
<dbReference type="PANTHER" id="PTHR10142:SF0">
    <property type="entry name" value="DNA REPAIR PROTEIN COMPLEMENTING XP-A CELLS"/>
    <property type="match status" value="1"/>
</dbReference>
<dbReference type="Pfam" id="PF05181">
    <property type="entry name" value="XPA_C"/>
    <property type="match status" value="1"/>
</dbReference>
<dbReference type="Pfam" id="PF01286">
    <property type="entry name" value="XPA_N"/>
    <property type="match status" value="1"/>
</dbReference>
<dbReference type="SUPFAM" id="SSF57716">
    <property type="entry name" value="Glucocorticoid receptor-like (DNA-binding domain)"/>
    <property type="match status" value="1"/>
</dbReference>
<dbReference type="SUPFAM" id="SSF46955">
    <property type="entry name" value="Putative DNA-binding domain"/>
    <property type="match status" value="1"/>
</dbReference>
<dbReference type="PROSITE" id="PS00752">
    <property type="entry name" value="XPA_1"/>
    <property type="match status" value="1"/>
</dbReference>
<dbReference type="PROSITE" id="PS00753">
    <property type="entry name" value="XPA_2"/>
    <property type="match status" value="1"/>
</dbReference>
<evidence type="ECO:0000250" key="1"/>
<evidence type="ECO:0000250" key="2">
    <source>
        <dbReference type="UniProtKB" id="P23025"/>
    </source>
</evidence>
<evidence type="ECO:0000255" key="3"/>
<evidence type="ECO:0000269" key="4">
    <source>
    </source>
</evidence>
<evidence type="ECO:0000269" key="5">
    <source ref="2"/>
</evidence>
<evidence type="ECO:0000305" key="6"/>
<keyword id="KW-0227">DNA damage</keyword>
<keyword id="KW-0234">DNA repair</keyword>
<keyword id="KW-0238">DNA-binding</keyword>
<keyword id="KW-0479">Metal-binding</keyword>
<keyword id="KW-0539">Nucleus</keyword>
<keyword id="KW-1185">Reference proteome</keyword>
<keyword id="KW-0862">Zinc</keyword>
<keyword id="KW-0863">Zinc-finger</keyword>
<protein>
    <recommendedName>
        <fullName>DNA repair protein complementing XP-A cells homolog</fullName>
    </recommendedName>
    <alternativeName>
        <fullName>Xeroderma pigmentosum group A-complementing protein homolog</fullName>
    </alternativeName>
</protein>
<accession>P27088</accession>
<accession>Q05AX5</accession>
<proteinExistence type="evidence at transcript level"/>
<sequence length="267" mass="31180">MEPEPEPEQEANKEEEKILSAAVRAKIERNRQRALMLRQARLACRPYPTGEGISTVKAPPKVIDSGGGFFIEEEEAEEQHVENVVRQPGPVLECDYLICEECGKDFMDSYLSNHFDLAVCDSCRDAEEKHKLITRTEAKQEYLLKDCDIDKREPVLKFILKKNPHNTHWGDMKLYLKAQVIKRSLEVWGSEEALEEAKEVRKDNRDKMKQKKFDKKVKELRRTVRSSLWKKEASGHQHEYGPEEHVEEDSYKKTCITCGYEMNYEKM</sequence>
<feature type="chain" id="PRO_0000208651" description="DNA repair protein complementing XP-A cells homolog">
    <location>
        <begin position="1"/>
        <end position="267"/>
    </location>
</feature>
<feature type="zinc finger region">
    <location>
        <begin position="99"/>
        <end position="123"/>
    </location>
</feature>
<feature type="short sequence motif" description="Nuclear localization signal" evidence="3">
    <location>
        <begin position="25"/>
        <end position="46"/>
    </location>
</feature>
<feature type="binding site" evidence="2">
    <location>
        <position position="99"/>
    </location>
    <ligand>
        <name>Zn(2+)</name>
        <dbReference type="ChEBI" id="CHEBI:29105"/>
    </ligand>
</feature>
<feature type="binding site" evidence="2">
    <location>
        <position position="102"/>
    </location>
    <ligand>
        <name>Zn(2+)</name>
        <dbReference type="ChEBI" id="CHEBI:29105"/>
    </ligand>
</feature>
<feature type="binding site" evidence="2">
    <location>
        <position position="120"/>
    </location>
    <ligand>
        <name>Zn(2+)</name>
        <dbReference type="ChEBI" id="CHEBI:29105"/>
    </ligand>
</feature>
<feature type="binding site" evidence="2">
    <location>
        <position position="123"/>
    </location>
    <ligand>
        <name>Zn(2+)</name>
        <dbReference type="ChEBI" id="CHEBI:29105"/>
    </ligand>
</feature>
<feature type="sequence variant" description="In one isoform." evidence="4 5">
    <location>
        <begin position="3"/>
        <end position="4"/>
    </location>
</feature>
<gene>
    <name type="primary">xpa</name>
    <name type="synonym">xpac</name>
</gene>
<comment type="function">
    <text evidence="1">Involved in DNA excision repair. Initiates repair by binding to damaged sites with various affinities, depending on the photoproduct and the transcriptional state of the region (By similarity).</text>
</comment>
<comment type="subcellular location">
    <subcellularLocation>
        <location>Nucleus</location>
    </subcellularLocation>
</comment>
<comment type="similarity">
    <text evidence="6">Belongs to the XPA family.</text>
</comment>
<organism>
    <name type="scientific">Xenopus laevis</name>
    <name type="common">African clawed frog</name>
    <dbReference type="NCBI Taxonomy" id="8355"/>
    <lineage>
        <taxon>Eukaryota</taxon>
        <taxon>Metazoa</taxon>
        <taxon>Chordata</taxon>
        <taxon>Craniata</taxon>
        <taxon>Vertebrata</taxon>
        <taxon>Euteleostomi</taxon>
        <taxon>Amphibia</taxon>
        <taxon>Batrachia</taxon>
        <taxon>Anura</taxon>
        <taxon>Pipoidea</taxon>
        <taxon>Pipidae</taxon>
        <taxon>Xenopodinae</taxon>
        <taxon>Xenopus</taxon>
        <taxon>Xenopus</taxon>
    </lineage>
</organism>
<name>XPA_XENLA</name>
<reference key="1">
    <citation type="journal article" date="1991" name="Biochem. Biophys. Res. Commun.">
        <title>Molecular cloning of human XPAC gene homologs from chicken, Xenopus laevis and Drosophila melanogaster.</title>
        <authorList>
            <person name="Shimamoto T."/>
            <person name="Kohno K."/>
            <person name="Tanaka K."/>
            <person name="Okada Y."/>
        </authorList>
    </citation>
    <scope>NUCLEOTIDE SEQUENCE [MRNA]</scope>
    <scope>VARIANT 3-PRO-GLU-4 DEL</scope>
</reference>
<reference key="2">
    <citation type="submission" date="2006-09" db="EMBL/GenBank/DDBJ databases">
        <authorList>
            <consortium name="NIH - Xenopus Gene Collection (XGC) project"/>
        </authorList>
    </citation>
    <scope>NUCLEOTIDE SEQUENCE [LARGE SCALE MRNA]</scope>
    <scope>VARIANT 3-PRO-GLU-4 DEL</scope>
    <source>
        <tissue>Fat body</tissue>
    </source>
</reference>